<gene>
    <name evidence="1" type="primary">hfq</name>
    <name type="ordered locus">Ent638_0355</name>
</gene>
<accession>A4W5R3</accession>
<dbReference type="EMBL" id="CP000653">
    <property type="protein sequence ID" value="ABP59043.1"/>
    <property type="molecule type" value="Genomic_DNA"/>
</dbReference>
<dbReference type="RefSeq" id="WP_011915616.1">
    <property type="nucleotide sequence ID" value="NC_009436.1"/>
</dbReference>
<dbReference type="SMR" id="A4W5R3"/>
<dbReference type="STRING" id="399742.Ent638_0355"/>
<dbReference type="GeneID" id="93307537"/>
<dbReference type="KEGG" id="ent:Ent638_0355"/>
<dbReference type="eggNOG" id="COG1923">
    <property type="taxonomic scope" value="Bacteria"/>
</dbReference>
<dbReference type="HOGENOM" id="CLU_113688_2_1_6"/>
<dbReference type="OrthoDB" id="9799751at2"/>
<dbReference type="Proteomes" id="UP000000230">
    <property type="component" value="Chromosome"/>
</dbReference>
<dbReference type="GO" id="GO:0005829">
    <property type="term" value="C:cytosol"/>
    <property type="evidence" value="ECO:0007669"/>
    <property type="project" value="TreeGrafter"/>
</dbReference>
<dbReference type="GO" id="GO:0003723">
    <property type="term" value="F:RNA binding"/>
    <property type="evidence" value="ECO:0007669"/>
    <property type="project" value="UniProtKB-UniRule"/>
</dbReference>
<dbReference type="GO" id="GO:0006355">
    <property type="term" value="P:regulation of DNA-templated transcription"/>
    <property type="evidence" value="ECO:0007669"/>
    <property type="project" value="InterPro"/>
</dbReference>
<dbReference type="GO" id="GO:0043487">
    <property type="term" value="P:regulation of RNA stability"/>
    <property type="evidence" value="ECO:0007669"/>
    <property type="project" value="TreeGrafter"/>
</dbReference>
<dbReference type="GO" id="GO:0045974">
    <property type="term" value="P:regulation of translation, ncRNA-mediated"/>
    <property type="evidence" value="ECO:0007669"/>
    <property type="project" value="TreeGrafter"/>
</dbReference>
<dbReference type="CDD" id="cd01716">
    <property type="entry name" value="Hfq"/>
    <property type="match status" value="1"/>
</dbReference>
<dbReference type="FunFam" id="2.30.30.100:FF:000001">
    <property type="entry name" value="RNA-binding protein Hfq"/>
    <property type="match status" value="1"/>
</dbReference>
<dbReference type="Gene3D" id="2.30.30.100">
    <property type="match status" value="1"/>
</dbReference>
<dbReference type="HAMAP" id="MF_00436">
    <property type="entry name" value="Hfq"/>
    <property type="match status" value="1"/>
</dbReference>
<dbReference type="InterPro" id="IPR005001">
    <property type="entry name" value="Hfq"/>
</dbReference>
<dbReference type="InterPro" id="IPR010920">
    <property type="entry name" value="LSM_dom_sf"/>
</dbReference>
<dbReference type="InterPro" id="IPR047575">
    <property type="entry name" value="Sm"/>
</dbReference>
<dbReference type="NCBIfam" id="TIGR02383">
    <property type="entry name" value="Hfq"/>
    <property type="match status" value="1"/>
</dbReference>
<dbReference type="NCBIfam" id="NF001602">
    <property type="entry name" value="PRK00395.1"/>
    <property type="match status" value="1"/>
</dbReference>
<dbReference type="PANTHER" id="PTHR34772">
    <property type="entry name" value="RNA-BINDING PROTEIN HFQ"/>
    <property type="match status" value="1"/>
</dbReference>
<dbReference type="PANTHER" id="PTHR34772:SF1">
    <property type="entry name" value="RNA-BINDING PROTEIN HFQ"/>
    <property type="match status" value="1"/>
</dbReference>
<dbReference type="Pfam" id="PF17209">
    <property type="entry name" value="Hfq"/>
    <property type="match status" value="1"/>
</dbReference>
<dbReference type="SUPFAM" id="SSF50182">
    <property type="entry name" value="Sm-like ribonucleoproteins"/>
    <property type="match status" value="1"/>
</dbReference>
<dbReference type="PROSITE" id="PS52002">
    <property type="entry name" value="SM"/>
    <property type="match status" value="1"/>
</dbReference>
<organism>
    <name type="scientific">Enterobacter sp. (strain 638)</name>
    <dbReference type="NCBI Taxonomy" id="399742"/>
    <lineage>
        <taxon>Bacteria</taxon>
        <taxon>Pseudomonadati</taxon>
        <taxon>Pseudomonadota</taxon>
        <taxon>Gammaproteobacteria</taxon>
        <taxon>Enterobacterales</taxon>
        <taxon>Enterobacteriaceae</taxon>
        <taxon>Enterobacter</taxon>
    </lineage>
</organism>
<comment type="function">
    <text evidence="1">RNA chaperone that binds small regulatory RNA (sRNAs) and mRNAs to facilitate mRNA translational regulation in response to envelope stress, environmental stress and changes in metabolite concentrations. Also binds with high specificity to tRNAs.</text>
</comment>
<comment type="subunit">
    <text evidence="1">Homohexamer.</text>
</comment>
<comment type="similarity">
    <text evidence="1">Belongs to the Hfq family.</text>
</comment>
<sequence>MAKGQSLQDPFLNALRRERVPVSIYLVNGIKLQGQIESFDQFVILLKNTVSQMVYKHAISTVVPSRPVSHHSNNAGGGTGSNFHHGSNAQGSSAPAQDSDETE</sequence>
<evidence type="ECO:0000255" key="1">
    <source>
        <dbReference type="HAMAP-Rule" id="MF_00436"/>
    </source>
</evidence>
<evidence type="ECO:0000255" key="2">
    <source>
        <dbReference type="PROSITE-ProRule" id="PRU01346"/>
    </source>
</evidence>
<evidence type="ECO:0000256" key="3">
    <source>
        <dbReference type="SAM" id="MobiDB-lite"/>
    </source>
</evidence>
<feature type="chain" id="PRO_1000060240" description="RNA-binding protein Hfq">
    <location>
        <begin position="1"/>
        <end position="103"/>
    </location>
</feature>
<feature type="domain" description="Sm" evidence="2">
    <location>
        <begin position="9"/>
        <end position="68"/>
    </location>
</feature>
<feature type="region of interest" description="Disordered" evidence="3">
    <location>
        <begin position="63"/>
        <end position="103"/>
    </location>
</feature>
<feature type="compositionally biased region" description="Polar residues" evidence="3">
    <location>
        <begin position="81"/>
        <end position="96"/>
    </location>
</feature>
<reference key="1">
    <citation type="journal article" date="2010" name="PLoS Genet.">
        <title>Genome sequence of the plant growth promoting endophytic bacterium Enterobacter sp. 638.</title>
        <authorList>
            <person name="Taghavi S."/>
            <person name="van der Lelie D."/>
            <person name="Hoffman A."/>
            <person name="Zhang Y.B."/>
            <person name="Walla M.D."/>
            <person name="Vangronsveld J."/>
            <person name="Newman L."/>
            <person name="Monchy S."/>
        </authorList>
    </citation>
    <scope>NUCLEOTIDE SEQUENCE [LARGE SCALE GENOMIC DNA]</scope>
    <source>
        <strain>638</strain>
    </source>
</reference>
<keyword id="KW-0694">RNA-binding</keyword>
<keyword id="KW-0346">Stress response</keyword>
<name>HFQ_ENT38</name>
<protein>
    <recommendedName>
        <fullName evidence="1">RNA-binding protein Hfq</fullName>
    </recommendedName>
</protein>
<proteinExistence type="inferred from homology"/>